<comment type="function">
    <text evidence="1">Part of the Sec protein translocase complex. Interacts with the SecYEG preprotein conducting channel. Has a central role in coupling the hydrolysis of ATP to the transfer of proteins into and across the cell membrane, serving both as a receptor for the preprotein-SecB complex and as an ATP-driven molecular motor driving the stepwise translocation of polypeptide chains across the membrane.</text>
</comment>
<comment type="catalytic activity">
    <reaction evidence="1">
        <text>ATP + H2O + cellular proteinSide 1 = ADP + phosphate + cellular proteinSide 2.</text>
        <dbReference type="EC" id="7.4.2.8"/>
    </reaction>
</comment>
<comment type="cofactor">
    <cofactor evidence="1">
        <name>Zn(2+)</name>
        <dbReference type="ChEBI" id="CHEBI:29105"/>
    </cofactor>
    <text evidence="1">May bind 1 zinc ion per subunit.</text>
</comment>
<comment type="subunit">
    <text evidence="1">Monomer and homodimer. Part of the essential Sec protein translocation apparatus which comprises SecA, SecYEG and auxiliary proteins SecDF-YajC and YidC.</text>
</comment>
<comment type="subcellular location">
    <subcellularLocation>
        <location evidence="1">Cell inner membrane</location>
        <topology evidence="1">Peripheral membrane protein</topology>
        <orientation evidence="1">Cytoplasmic side</orientation>
    </subcellularLocation>
    <subcellularLocation>
        <location evidence="1">Cytoplasm</location>
    </subcellularLocation>
    <text evidence="1">Distribution is 50-50.</text>
</comment>
<comment type="similarity">
    <text evidence="1">Belongs to the SecA family.</text>
</comment>
<evidence type="ECO:0000255" key="1">
    <source>
        <dbReference type="HAMAP-Rule" id="MF_01382"/>
    </source>
</evidence>
<reference key="1">
    <citation type="submission" date="2008-02" db="EMBL/GenBank/DDBJ databases">
        <title>Complete sequence of chromosome 1 of Burkholderia cenocepacia MC0-3.</title>
        <authorList>
            <person name="Copeland A."/>
            <person name="Lucas S."/>
            <person name="Lapidus A."/>
            <person name="Barry K."/>
            <person name="Bruce D."/>
            <person name="Goodwin L."/>
            <person name="Glavina del Rio T."/>
            <person name="Dalin E."/>
            <person name="Tice H."/>
            <person name="Pitluck S."/>
            <person name="Chain P."/>
            <person name="Malfatti S."/>
            <person name="Shin M."/>
            <person name="Vergez L."/>
            <person name="Schmutz J."/>
            <person name="Larimer F."/>
            <person name="Land M."/>
            <person name="Hauser L."/>
            <person name="Kyrpides N."/>
            <person name="Mikhailova N."/>
            <person name="Tiedje J."/>
            <person name="Richardson P."/>
        </authorList>
    </citation>
    <scope>NUCLEOTIDE SEQUENCE [LARGE SCALE GENOMIC DNA]</scope>
    <source>
        <strain>MC0-3</strain>
    </source>
</reference>
<protein>
    <recommendedName>
        <fullName evidence="1">Protein translocase subunit SecA</fullName>
        <ecNumber evidence="1">7.4.2.8</ecNumber>
    </recommendedName>
</protein>
<proteinExistence type="inferred from homology"/>
<keyword id="KW-0067">ATP-binding</keyword>
<keyword id="KW-0997">Cell inner membrane</keyword>
<keyword id="KW-1003">Cell membrane</keyword>
<keyword id="KW-0963">Cytoplasm</keyword>
<keyword id="KW-0472">Membrane</keyword>
<keyword id="KW-0479">Metal-binding</keyword>
<keyword id="KW-0547">Nucleotide-binding</keyword>
<keyword id="KW-0653">Protein transport</keyword>
<keyword id="KW-1278">Translocase</keyword>
<keyword id="KW-0811">Translocation</keyword>
<keyword id="KW-0813">Transport</keyword>
<keyword id="KW-0862">Zinc</keyword>
<name>SECA_BURO0</name>
<dbReference type="EC" id="7.4.2.8" evidence="1"/>
<dbReference type="EMBL" id="CP000958">
    <property type="protein sequence ID" value="ACA89717.1"/>
    <property type="molecule type" value="Genomic_DNA"/>
</dbReference>
<dbReference type="RefSeq" id="WP_011694136.1">
    <property type="nucleotide sequence ID" value="NC_010508.1"/>
</dbReference>
<dbReference type="SMR" id="B1JV87"/>
<dbReference type="GeneID" id="83047340"/>
<dbReference type="KEGG" id="bcm:Bcenmc03_0539"/>
<dbReference type="HOGENOM" id="CLU_005314_3_0_4"/>
<dbReference type="Proteomes" id="UP000002169">
    <property type="component" value="Chromosome 1"/>
</dbReference>
<dbReference type="GO" id="GO:0031522">
    <property type="term" value="C:cell envelope Sec protein transport complex"/>
    <property type="evidence" value="ECO:0007669"/>
    <property type="project" value="TreeGrafter"/>
</dbReference>
<dbReference type="GO" id="GO:0005829">
    <property type="term" value="C:cytosol"/>
    <property type="evidence" value="ECO:0007669"/>
    <property type="project" value="TreeGrafter"/>
</dbReference>
<dbReference type="GO" id="GO:0005886">
    <property type="term" value="C:plasma membrane"/>
    <property type="evidence" value="ECO:0007669"/>
    <property type="project" value="UniProtKB-SubCell"/>
</dbReference>
<dbReference type="GO" id="GO:0005524">
    <property type="term" value="F:ATP binding"/>
    <property type="evidence" value="ECO:0007669"/>
    <property type="project" value="UniProtKB-UniRule"/>
</dbReference>
<dbReference type="GO" id="GO:0046872">
    <property type="term" value="F:metal ion binding"/>
    <property type="evidence" value="ECO:0007669"/>
    <property type="project" value="UniProtKB-KW"/>
</dbReference>
<dbReference type="GO" id="GO:0008564">
    <property type="term" value="F:protein-exporting ATPase activity"/>
    <property type="evidence" value="ECO:0007669"/>
    <property type="project" value="UniProtKB-EC"/>
</dbReference>
<dbReference type="GO" id="GO:0065002">
    <property type="term" value="P:intracellular protein transmembrane transport"/>
    <property type="evidence" value="ECO:0007669"/>
    <property type="project" value="UniProtKB-UniRule"/>
</dbReference>
<dbReference type="GO" id="GO:0017038">
    <property type="term" value="P:protein import"/>
    <property type="evidence" value="ECO:0007669"/>
    <property type="project" value="InterPro"/>
</dbReference>
<dbReference type="GO" id="GO:0006605">
    <property type="term" value="P:protein targeting"/>
    <property type="evidence" value="ECO:0007669"/>
    <property type="project" value="UniProtKB-UniRule"/>
</dbReference>
<dbReference type="GO" id="GO:0043952">
    <property type="term" value="P:protein transport by the Sec complex"/>
    <property type="evidence" value="ECO:0007669"/>
    <property type="project" value="TreeGrafter"/>
</dbReference>
<dbReference type="CDD" id="cd17928">
    <property type="entry name" value="DEXDc_SecA"/>
    <property type="match status" value="1"/>
</dbReference>
<dbReference type="CDD" id="cd18803">
    <property type="entry name" value="SF2_C_secA"/>
    <property type="match status" value="1"/>
</dbReference>
<dbReference type="FunFam" id="3.40.50.300:FF:000081">
    <property type="entry name" value="Preprotein translocase subunit SecA"/>
    <property type="match status" value="1"/>
</dbReference>
<dbReference type="FunFam" id="3.40.50.300:FF:000113">
    <property type="entry name" value="Preprotein translocase subunit SecA"/>
    <property type="match status" value="1"/>
</dbReference>
<dbReference type="FunFam" id="3.90.1440.10:FF:000001">
    <property type="entry name" value="Preprotein translocase subunit SecA"/>
    <property type="match status" value="1"/>
</dbReference>
<dbReference type="FunFam" id="1.10.3060.10:FF:000003">
    <property type="entry name" value="Protein translocase subunit SecA"/>
    <property type="match status" value="1"/>
</dbReference>
<dbReference type="Gene3D" id="1.10.3060.10">
    <property type="entry name" value="Helical scaffold and wing domains of SecA"/>
    <property type="match status" value="1"/>
</dbReference>
<dbReference type="Gene3D" id="3.40.50.300">
    <property type="entry name" value="P-loop containing nucleotide triphosphate hydrolases"/>
    <property type="match status" value="2"/>
</dbReference>
<dbReference type="Gene3D" id="3.90.1440.10">
    <property type="entry name" value="SecA, preprotein cross-linking domain"/>
    <property type="match status" value="1"/>
</dbReference>
<dbReference type="HAMAP" id="MF_01382">
    <property type="entry name" value="SecA"/>
    <property type="match status" value="1"/>
</dbReference>
<dbReference type="InterPro" id="IPR014001">
    <property type="entry name" value="Helicase_ATP-bd"/>
</dbReference>
<dbReference type="InterPro" id="IPR001650">
    <property type="entry name" value="Helicase_C-like"/>
</dbReference>
<dbReference type="InterPro" id="IPR027417">
    <property type="entry name" value="P-loop_NTPase"/>
</dbReference>
<dbReference type="InterPro" id="IPR004027">
    <property type="entry name" value="SEC_C_motif"/>
</dbReference>
<dbReference type="InterPro" id="IPR000185">
    <property type="entry name" value="SecA"/>
</dbReference>
<dbReference type="InterPro" id="IPR020937">
    <property type="entry name" value="SecA_CS"/>
</dbReference>
<dbReference type="InterPro" id="IPR011115">
    <property type="entry name" value="SecA_DEAD"/>
</dbReference>
<dbReference type="InterPro" id="IPR014018">
    <property type="entry name" value="SecA_motor_DEAD"/>
</dbReference>
<dbReference type="InterPro" id="IPR011130">
    <property type="entry name" value="SecA_preprotein_X-link_dom"/>
</dbReference>
<dbReference type="InterPro" id="IPR044722">
    <property type="entry name" value="SecA_SF2_C"/>
</dbReference>
<dbReference type="InterPro" id="IPR011116">
    <property type="entry name" value="SecA_Wing/Scaffold"/>
</dbReference>
<dbReference type="InterPro" id="IPR036266">
    <property type="entry name" value="SecA_Wing/Scaffold_sf"/>
</dbReference>
<dbReference type="InterPro" id="IPR036670">
    <property type="entry name" value="SecA_X-link_sf"/>
</dbReference>
<dbReference type="NCBIfam" id="NF009538">
    <property type="entry name" value="PRK12904.1"/>
    <property type="match status" value="1"/>
</dbReference>
<dbReference type="NCBIfam" id="TIGR00963">
    <property type="entry name" value="secA"/>
    <property type="match status" value="1"/>
</dbReference>
<dbReference type="PANTHER" id="PTHR30612:SF0">
    <property type="entry name" value="CHLOROPLAST PROTEIN-TRANSPORTING ATPASE"/>
    <property type="match status" value="1"/>
</dbReference>
<dbReference type="PANTHER" id="PTHR30612">
    <property type="entry name" value="SECA INNER MEMBRANE COMPONENT OF SEC PROTEIN SECRETION SYSTEM"/>
    <property type="match status" value="1"/>
</dbReference>
<dbReference type="Pfam" id="PF21090">
    <property type="entry name" value="P-loop_SecA"/>
    <property type="match status" value="1"/>
</dbReference>
<dbReference type="Pfam" id="PF02810">
    <property type="entry name" value="SEC-C"/>
    <property type="match status" value="1"/>
</dbReference>
<dbReference type="Pfam" id="PF07517">
    <property type="entry name" value="SecA_DEAD"/>
    <property type="match status" value="1"/>
</dbReference>
<dbReference type="Pfam" id="PF01043">
    <property type="entry name" value="SecA_PP_bind"/>
    <property type="match status" value="1"/>
</dbReference>
<dbReference type="Pfam" id="PF07516">
    <property type="entry name" value="SecA_SW"/>
    <property type="match status" value="1"/>
</dbReference>
<dbReference type="PRINTS" id="PR00906">
    <property type="entry name" value="SECA"/>
</dbReference>
<dbReference type="SMART" id="SM00957">
    <property type="entry name" value="SecA_DEAD"/>
    <property type="match status" value="1"/>
</dbReference>
<dbReference type="SMART" id="SM00958">
    <property type="entry name" value="SecA_PP_bind"/>
    <property type="match status" value="1"/>
</dbReference>
<dbReference type="SUPFAM" id="SSF81886">
    <property type="entry name" value="Helical scaffold and wing domains of SecA"/>
    <property type="match status" value="1"/>
</dbReference>
<dbReference type="SUPFAM" id="SSF52540">
    <property type="entry name" value="P-loop containing nucleoside triphosphate hydrolases"/>
    <property type="match status" value="2"/>
</dbReference>
<dbReference type="SUPFAM" id="SSF81767">
    <property type="entry name" value="Pre-protein crosslinking domain of SecA"/>
    <property type="match status" value="1"/>
</dbReference>
<dbReference type="PROSITE" id="PS01312">
    <property type="entry name" value="SECA"/>
    <property type="match status" value="1"/>
</dbReference>
<dbReference type="PROSITE" id="PS51196">
    <property type="entry name" value="SECA_MOTOR_DEAD"/>
    <property type="match status" value="1"/>
</dbReference>
<organism>
    <name type="scientific">Burkholderia orbicola (strain MC0-3)</name>
    <dbReference type="NCBI Taxonomy" id="406425"/>
    <lineage>
        <taxon>Bacteria</taxon>
        <taxon>Pseudomonadati</taxon>
        <taxon>Pseudomonadota</taxon>
        <taxon>Betaproteobacteria</taxon>
        <taxon>Burkholderiales</taxon>
        <taxon>Burkholderiaceae</taxon>
        <taxon>Burkholderia</taxon>
        <taxon>Burkholderia cepacia complex</taxon>
        <taxon>Burkholderia orbicola</taxon>
    </lineage>
</organism>
<feature type="chain" id="PRO_1000144982" description="Protein translocase subunit SecA">
    <location>
        <begin position="1"/>
        <end position="932"/>
    </location>
</feature>
<feature type="binding site" evidence="1">
    <location>
        <position position="87"/>
    </location>
    <ligand>
        <name>ATP</name>
        <dbReference type="ChEBI" id="CHEBI:30616"/>
    </ligand>
</feature>
<feature type="binding site" evidence="1">
    <location>
        <begin position="105"/>
        <end position="109"/>
    </location>
    <ligand>
        <name>ATP</name>
        <dbReference type="ChEBI" id="CHEBI:30616"/>
    </ligand>
</feature>
<feature type="binding site" evidence="1">
    <location>
        <position position="515"/>
    </location>
    <ligand>
        <name>ATP</name>
        <dbReference type="ChEBI" id="CHEBI:30616"/>
    </ligand>
</feature>
<feature type="binding site" evidence="1">
    <location>
        <position position="916"/>
    </location>
    <ligand>
        <name>Zn(2+)</name>
        <dbReference type="ChEBI" id="CHEBI:29105"/>
    </ligand>
</feature>
<feature type="binding site" evidence="1">
    <location>
        <position position="918"/>
    </location>
    <ligand>
        <name>Zn(2+)</name>
        <dbReference type="ChEBI" id="CHEBI:29105"/>
    </ligand>
</feature>
<feature type="binding site" evidence="1">
    <location>
        <position position="927"/>
    </location>
    <ligand>
        <name>Zn(2+)</name>
        <dbReference type="ChEBI" id="CHEBI:29105"/>
    </ligand>
</feature>
<feature type="binding site" evidence="1">
    <location>
        <position position="928"/>
    </location>
    <ligand>
        <name>Zn(2+)</name>
        <dbReference type="ChEBI" id="CHEBI:29105"/>
    </ligand>
</feature>
<gene>
    <name evidence="1" type="primary">secA</name>
    <name type="ordered locus">Bcenmc03_0539</name>
</gene>
<accession>B1JV87</accession>
<sequence>MTTGFLQKIFGSRNQRLVKQYQKTVATINALETQIEKLTDDQLRGKTDEFRQRVAAGESLDKLLPEAFAVCREASRRVLKMRHFDVQMIGGMVLHYGKIAEMRTGEGKTLVATLPVYLNALAGRGVHVVTVNDYLAQRDAEWMARLYNFLGLSVGINLSGMEHDQKQQAYAADITYGTNNEFGFDYLRDNMVYETDARVQRALNFAVVDEVDSILIDEARTPLIISGQAEDHTELYVRMNALPPLLERQIGEEKADGTGVEKPGDYTLDEKARQVFLTESGHEKAERLLAEWGLIGEGESLYAPQNITLMHHVYAALRAHTLFHKDQHYVVQNGEVVIVDEFTGRLMAGRRWSDGLHQAVEAKEHVKIQSENQTLASITFQNYFRMYAKLAGMTGTADTEAYEFNEIYGLETVVIPTNRPPKRIDKQDQIYKTAKERYDAVIRDIRDCYERGQPVLVGTTSIENSELLSHLLKQAGLPHEVLNAKQHEREAAIVAEAGRPKRITIATNMAGRGTDIVLGGNAEKQAAFIEADDAIPADEKARRIQKLHDEWETLHEEVKAAGGLHIIGTERHESRRIDNQLRGRAGRQGDPGSSRFYLSLDDPLLRIFAGDRVRSIMDRLKMPEGEAIEAGIVTRSIESAQRKVEARNFDIRKQLLEYDDVSNDQRKVIYQQRNELLEAHDITETITAMRHGVITEVVRQFVPEGSIEEQWDVPELEEALRNDWQLDLAIQEMVNESSSITAEEILDAVMTAADEQYEAKVAMVGRESFSAFERSVMLQTVDRLWREHLAALDHLRQGIHLRGYAQKNPKQEYKREAFELFAAMLDAIKQEVTRIVMNVQIQSPEQLEEAAEQIEERGGHLENVEYQHADYADAGAPVANVTAAAAATATADMVGSAMTHSGPGGEMPKVGRNDPCPCGSGKKYKQCHGKLS</sequence>